<gene>
    <name type="ordered locus">YJL120W</name>
    <name type="ORF">J0734</name>
</gene>
<protein>
    <recommendedName>
        <fullName>Putative uncharacterized protein YJL120W</fullName>
    </recommendedName>
</protein>
<reference key="1">
    <citation type="journal article" date="1996" name="Yeast">
        <title>Sequencing analysis of a 40.2 kb fragment of yeast chromosome X reveals 19 open reading frames including URA2 (5' end), TRK1, PBS2, SPT10, GCD14, RPE1, PHO86, NCA3, ASF1, CCT7, GZF3, two tRNA genes, three remnant delta elements and a Ty4 transposon.</title>
        <authorList>
            <person name="Cziepluch C."/>
            <person name="Kordes E."/>
            <person name="Pujol A."/>
            <person name="Jauniaux J.-C."/>
        </authorList>
    </citation>
    <scope>NUCLEOTIDE SEQUENCE [GENOMIC DNA]</scope>
    <source>
        <strain>ATCC 96604 / S288c / FY1679</strain>
    </source>
</reference>
<reference key="2">
    <citation type="journal article" date="1996" name="EMBO J.">
        <title>Complete nucleotide sequence of Saccharomyces cerevisiae chromosome X.</title>
        <authorList>
            <person name="Galibert F."/>
            <person name="Alexandraki D."/>
            <person name="Baur A."/>
            <person name="Boles E."/>
            <person name="Chalwatzis N."/>
            <person name="Chuat J.-C."/>
            <person name="Coster F."/>
            <person name="Cziepluch C."/>
            <person name="de Haan M."/>
            <person name="Domdey H."/>
            <person name="Durand P."/>
            <person name="Entian K.-D."/>
            <person name="Gatius M."/>
            <person name="Goffeau A."/>
            <person name="Grivell L.A."/>
            <person name="Hennemann A."/>
            <person name="Herbert C.J."/>
            <person name="Heumann K."/>
            <person name="Hilger F."/>
            <person name="Hollenberg C.P."/>
            <person name="Huang M.-E."/>
            <person name="Jacq C."/>
            <person name="Jauniaux J.-C."/>
            <person name="Katsoulou C."/>
            <person name="Kirchrath L."/>
            <person name="Kleine K."/>
            <person name="Kordes E."/>
            <person name="Koetter P."/>
            <person name="Liebl S."/>
            <person name="Louis E.J."/>
            <person name="Manus V."/>
            <person name="Mewes H.-W."/>
            <person name="Miosga T."/>
            <person name="Obermaier B."/>
            <person name="Perea J."/>
            <person name="Pohl T.M."/>
            <person name="Portetelle D."/>
            <person name="Pujol A."/>
            <person name="Purnelle B."/>
            <person name="Ramezani Rad M."/>
            <person name="Rasmussen S.W."/>
            <person name="Rose M."/>
            <person name="Rossau R."/>
            <person name="Schaaff-Gerstenschlaeger I."/>
            <person name="Smits P.H.M."/>
            <person name="Scarcez T."/>
            <person name="Soriano N."/>
            <person name="To Van D."/>
            <person name="Tzermia M."/>
            <person name="Van Broekhoven A."/>
            <person name="Vandenbol M."/>
            <person name="Wedler H."/>
            <person name="von Wettstein D."/>
            <person name="Wambutt R."/>
            <person name="Zagulski M."/>
            <person name="Zollner A."/>
            <person name="Karpfinger-Hartl L."/>
        </authorList>
    </citation>
    <scope>NUCLEOTIDE SEQUENCE [LARGE SCALE GENOMIC DNA]</scope>
    <source>
        <strain>ATCC 204508 / S288c</strain>
    </source>
</reference>
<reference key="3">
    <citation type="journal article" date="2014" name="G3 (Bethesda)">
        <title>The reference genome sequence of Saccharomyces cerevisiae: Then and now.</title>
        <authorList>
            <person name="Engel S.R."/>
            <person name="Dietrich F.S."/>
            <person name="Fisk D.G."/>
            <person name="Binkley G."/>
            <person name="Balakrishnan R."/>
            <person name="Costanzo M.C."/>
            <person name="Dwight S.S."/>
            <person name="Hitz B.C."/>
            <person name="Karra K."/>
            <person name="Nash R.S."/>
            <person name="Weng S."/>
            <person name="Wong E.D."/>
            <person name="Lloyd P."/>
            <person name="Skrzypek M.S."/>
            <person name="Miyasato S.R."/>
            <person name="Simison M."/>
            <person name="Cherry J.M."/>
        </authorList>
    </citation>
    <scope>GENOME REANNOTATION</scope>
    <source>
        <strain>ATCC 204508 / S288c</strain>
    </source>
</reference>
<reference key="4">
    <citation type="journal article" date="2005" name="J. Natl. Cancer Inst.">
        <title>Mechanism of selectivity of an angiogenesis inhibitor from screening a genome-wide set of Saccharomyces cerevisiae deletion strains.</title>
        <authorList>
            <person name="Dilda P.J."/>
            <person name="Don A.S."/>
            <person name="Tanabe K.M."/>
            <person name="Higgins V.J."/>
            <person name="Allen J.D."/>
            <person name="Dawes I.W."/>
            <person name="Hogg P.J."/>
        </authorList>
    </citation>
    <scope>DISRUPTION PHENOTYPE</scope>
</reference>
<organism>
    <name type="scientific">Saccharomyces cerevisiae (strain ATCC 204508 / S288c)</name>
    <name type="common">Baker's yeast</name>
    <dbReference type="NCBI Taxonomy" id="559292"/>
    <lineage>
        <taxon>Eukaryota</taxon>
        <taxon>Fungi</taxon>
        <taxon>Dikarya</taxon>
        <taxon>Ascomycota</taxon>
        <taxon>Saccharomycotina</taxon>
        <taxon>Saccharomycetes</taxon>
        <taxon>Saccharomycetales</taxon>
        <taxon>Saccharomycetaceae</taxon>
        <taxon>Saccharomyces</taxon>
    </lineage>
</organism>
<sequence length="107" mass="12803">MTFATQVGEVRSKDTGSYNWFDHFFLCVYLALGISKWPSCMKLYRVCFIFLFTGGFFLFWLSYNRDHERSSSLRIKKVPIHIQKSDYFPSSTWIAVLVFSWRHIFCF</sequence>
<proteinExistence type="uncertain"/>
<comment type="subcellular location">
    <subcellularLocation>
        <location evidence="3">Membrane</location>
        <topology evidence="3">Multi-pass membrane protein</topology>
    </subcellularLocation>
</comment>
<comment type="disruption phenotype">
    <text evidence="2">Confers sensitivity to the synthetic tripeptide arsenical 4-(N-(S-glutathionylacetyl)amino) phenylarsenoxide (GSAO).</text>
</comment>
<comment type="miscellaneous">
    <text evidence="3">Partially overlaps RPE1. Disruption phenotypes caused by deletion of this gene may also be a result of a defect in its overlapping gene.</text>
</comment>
<comment type="caution">
    <text evidence="4">Product of a dubious gene prediction unlikely to encode a functional protein. Because of that it is not part of the S.cerevisiae S288c complete/reference proteome set.</text>
</comment>
<feature type="chain" id="PRO_0000203042" description="Putative uncharacterized protein YJL120W">
    <location>
        <begin position="1"/>
        <end position="107"/>
    </location>
</feature>
<feature type="transmembrane region" description="Helical" evidence="1">
    <location>
        <begin position="15"/>
        <end position="35"/>
    </location>
</feature>
<feature type="transmembrane region" description="Helical" evidence="1">
    <location>
        <begin position="43"/>
        <end position="63"/>
    </location>
</feature>
<feature type="transmembrane region" description="Helical" evidence="1">
    <location>
        <begin position="87"/>
        <end position="107"/>
    </location>
</feature>
<dbReference type="EMBL" id="Z49396">
    <property type="protein sequence ID" value="CAA89416.1"/>
    <property type="molecule type" value="Genomic_DNA"/>
</dbReference>
<dbReference type="PIR" id="S56901">
    <property type="entry name" value="S56901"/>
</dbReference>
<dbReference type="SMR" id="P47020"/>
<dbReference type="DIP" id="DIP-5293N"/>
<dbReference type="IntAct" id="P47020">
    <property type="interactions" value="1"/>
</dbReference>
<dbReference type="STRING" id="4932.YJL120W"/>
<dbReference type="iPTMnet" id="P47020"/>
<dbReference type="PaxDb" id="4932-YJL120W"/>
<dbReference type="EnsemblFungi" id="YJL120W_mRNA">
    <property type="protein sequence ID" value="YJL120W"/>
    <property type="gene ID" value="YJL120W"/>
</dbReference>
<dbReference type="AGR" id="SGD:S000003656"/>
<dbReference type="SGD" id="S000003656">
    <property type="gene designation" value="YJL120W"/>
</dbReference>
<dbReference type="HOGENOM" id="CLU_2212009_0_0_1"/>
<dbReference type="GO" id="GO:0016020">
    <property type="term" value="C:membrane"/>
    <property type="evidence" value="ECO:0007669"/>
    <property type="project" value="UniProtKB-SubCell"/>
</dbReference>
<keyword id="KW-0472">Membrane</keyword>
<keyword id="KW-0812">Transmembrane</keyword>
<keyword id="KW-1133">Transmembrane helix</keyword>
<accession>P47020</accession>
<evidence type="ECO:0000255" key="1"/>
<evidence type="ECO:0000269" key="2">
    <source>
    </source>
</evidence>
<evidence type="ECO:0000305" key="3"/>
<evidence type="ECO:0000305" key="4">
    <source>
    </source>
</evidence>
<name>YJM0_YEAST</name>